<evidence type="ECO:0000255" key="1">
    <source>
        <dbReference type="HAMAP-Rule" id="MF_00015"/>
    </source>
</evidence>
<evidence type="ECO:0000305" key="2"/>
<name>LEXA_PSEPU</name>
<sequence>MLKLTPRQAEILAFIKRCLEDNGFPPTRAEIAQELGFKSPNAAEEHLKALARKGAIEMTPGASRGIRIPGLEAKAEEAGLPIIGRVAAGAPILAEQHIEQSCNINPAFFHPQADYLLRVHGMSMKDVGIFDGDLLAVHTCREARNGQIVVARIGDEVTVKRFKREGSKVWLLAENPEFAPIEVDLKEQELVIEGLSVGVIRR</sequence>
<proteinExistence type="inferred from homology"/>
<feature type="chain" id="PRO_0000170070" description="LexA repressor">
    <location>
        <begin position="1"/>
        <end position="202"/>
    </location>
</feature>
<feature type="DNA-binding region" description="H-T-H motif" evidence="1">
    <location>
        <begin position="28"/>
        <end position="48"/>
    </location>
</feature>
<feature type="active site" description="For autocatalytic cleavage activity" evidence="1">
    <location>
        <position position="123"/>
    </location>
</feature>
<feature type="active site" description="For autocatalytic cleavage activity" evidence="1">
    <location>
        <position position="160"/>
    </location>
</feature>
<feature type="site" description="Cleavage; by autolysis" evidence="1">
    <location>
        <begin position="88"/>
        <end position="89"/>
    </location>
</feature>
<feature type="sequence conflict" description="In Ref. 2; CAC17802." evidence="2" ref="2">
    <original>A</original>
    <variation>T</variation>
    <location>
        <position position="73"/>
    </location>
</feature>
<feature type="sequence conflict" description="In Ref. 2; CAC17802." evidence="2" ref="2">
    <original>A</original>
    <variation>N</variation>
    <location>
        <position position="78"/>
    </location>
</feature>
<feature type="sequence conflict" description="In Ref. 2; CAC17802." evidence="2" ref="2">
    <original>A</original>
    <variation>S</variation>
    <location>
        <position position="107"/>
    </location>
</feature>
<feature type="sequence conflict" description="In Ref. 2; CAC17802." evidence="2" ref="2">
    <original>Q</original>
    <variation>H</variation>
    <location>
        <position position="112"/>
    </location>
</feature>
<feature type="sequence conflict" description="In Ref. 2; CAC17802." evidence="2" ref="2">
    <original>S</original>
    <variation>T</variation>
    <location>
        <position position="167"/>
    </location>
</feature>
<gene>
    <name evidence="1" type="primary">lexA</name>
</gene>
<reference key="1">
    <citation type="journal article" date="1992" name="Mol. Gen. Genet.">
        <title>Nucleotide sequence analysis and comparison of the lexA genes from Salmonella typhimurium, Erwinia carotovora, Pseudomonas aeruginosa and Pseudomonas putida.</title>
        <authorList>
            <person name="Garriga X."/>
            <person name="Calero S."/>
            <person name="Barbe J."/>
        </authorList>
    </citation>
    <scope>NUCLEOTIDE SEQUENCE [GENOMIC DNA]</scope>
    <source>
        <strain>ATCC 33015 / DSM 3931 / JCM 6156 / NCIMB 12182 / mt-2</strain>
    </source>
</reference>
<reference key="2">
    <citation type="journal article" date="2001" name="J. Bacteriol.">
        <title>Regulation of rpoS gene expression in Pseudomonas: involvement of a TetR family regulator.</title>
        <authorList>
            <person name="Kojic M."/>
            <person name="Venturi V."/>
        </authorList>
    </citation>
    <scope>NUCLEOTIDE SEQUENCE [GENOMIC DNA]</scope>
    <source>
        <strain>WCS358</strain>
    </source>
</reference>
<dbReference type="EC" id="3.4.21.88" evidence="1"/>
<dbReference type="EMBL" id="X63017">
    <property type="protein sequence ID" value="CAA44749.1"/>
    <property type="molecule type" value="Genomic_DNA"/>
</dbReference>
<dbReference type="EMBL" id="AJ293485">
    <property type="protein sequence ID" value="CAC17802.1"/>
    <property type="molecule type" value="Genomic_DNA"/>
</dbReference>
<dbReference type="PIR" id="S30164">
    <property type="entry name" value="S30164"/>
</dbReference>
<dbReference type="RefSeq" id="WP_010953131.1">
    <property type="nucleotide sequence ID" value="NZ_VCPS01000016.1"/>
</dbReference>
<dbReference type="SMR" id="P0A154"/>
<dbReference type="MEROPS" id="S24.001"/>
<dbReference type="GeneID" id="83681336"/>
<dbReference type="eggNOG" id="COG1974">
    <property type="taxonomic scope" value="Bacteria"/>
</dbReference>
<dbReference type="OMA" id="HVWLLPH"/>
<dbReference type="BRENDA" id="3.4.21.88">
    <property type="organism ID" value="5092"/>
</dbReference>
<dbReference type="GO" id="GO:0003677">
    <property type="term" value="F:DNA binding"/>
    <property type="evidence" value="ECO:0007669"/>
    <property type="project" value="UniProtKB-UniRule"/>
</dbReference>
<dbReference type="GO" id="GO:0004252">
    <property type="term" value="F:serine-type endopeptidase activity"/>
    <property type="evidence" value="ECO:0007669"/>
    <property type="project" value="UniProtKB-UniRule"/>
</dbReference>
<dbReference type="GO" id="GO:0006281">
    <property type="term" value="P:DNA repair"/>
    <property type="evidence" value="ECO:0007669"/>
    <property type="project" value="UniProtKB-UniRule"/>
</dbReference>
<dbReference type="GO" id="GO:0006260">
    <property type="term" value="P:DNA replication"/>
    <property type="evidence" value="ECO:0007669"/>
    <property type="project" value="UniProtKB-UniRule"/>
</dbReference>
<dbReference type="GO" id="GO:0045892">
    <property type="term" value="P:negative regulation of DNA-templated transcription"/>
    <property type="evidence" value="ECO:0007669"/>
    <property type="project" value="UniProtKB-UniRule"/>
</dbReference>
<dbReference type="GO" id="GO:0006508">
    <property type="term" value="P:proteolysis"/>
    <property type="evidence" value="ECO:0007669"/>
    <property type="project" value="InterPro"/>
</dbReference>
<dbReference type="GO" id="GO:0009432">
    <property type="term" value="P:SOS response"/>
    <property type="evidence" value="ECO:0007669"/>
    <property type="project" value="UniProtKB-UniRule"/>
</dbReference>
<dbReference type="CDD" id="cd06529">
    <property type="entry name" value="S24_LexA-like"/>
    <property type="match status" value="1"/>
</dbReference>
<dbReference type="FunFam" id="1.10.10.10:FF:000009">
    <property type="entry name" value="LexA repressor"/>
    <property type="match status" value="1"/>
</dbReference>
<dbReference type="FunFam" id="2.10.109.10:FF:000001">
    <property type="entry name" value="LexA repressor"/>
    <property type="match status" value="1"/>
</dbReference>
<dbReference type="Gene3D" id="2.10.109.10">
    <property type="entry name" value="Umud Fragment, subunit A"/>
    <property type="match status" value="1"/>
</dbReference>
<dbReference type="Gene3D" id="1.10.10.10">
    <property type="entry name" value="Winged helix-like DNA-binding domain superfamily/Winged helix DNA-binding domain"/>
    <property type="match status" value="1"/>
</dbReference>
<dbReference type="HAMAP" id="MF_00015">
    <property type="entry name" value="LexA"/>
    <property type="match status" value="1"/>
</dbReference>
<dbReference type="InterPro" id="IPR006200">
    <property type="entry name" value="LexA"/>
</dbReference>
<dbReference type="InterPro" id="IPR039418">
    <property type="entry name" value="LexA-like"/>
</dbReference>
<dbReference type="InterPro" id="IPR036286">
    <property type="entry name" value="LexA/Signal_pep-like_sf"/>
</dbReference>
<dbReference type="InterPro" id="IPR006199">
    <property type="entry name" value="LexA_DNA-bd_dom"/>
</dbReference>
<dbReference type="InterPro" id="IPR050077">
    <property type="entry name" value="LexA_repressor"/>
</dbReference>
<dbReference type="InterPro" id="IPR006197">
    <property type="entry name" value="Peptidase_S24_LexA"/>
</dbReference>
<dbReference type="InterPro" id="IPR015927">
    <property type="entry name" value="Peptidase_S24_S26A/B/C"/>
</dbReference>
<dbReference type="InterPro" id="IPR036388">
    <property type="entry name" value="WH-like_DNA-bd_sf"/>
</dbReference>
<dbReference type="InterPro" id="IPR036390">
    <property type="entry name" value="WH_DNA-bd_sf"/>
</dbReference>
<dbReference type="NCBIfam" id="TIGR00498">
    <property type="entry name" value="lexA"/>
    <property type="match status" value="1"/>
</dbReference>
<dbReference type="PANTHER" id="PTHR33516">
    <property type="entry name" value="LEXA REPRESSOR"/>
    <property type="match status" value="1"/>
</dbReference>
<dbReference type="PANTHER" id="PTHR33516:SF2">
    <property type="entry name" value="LEXA REPRESSOR-RELATED"/>
    <property type="match status" value="1"/>
</dbReference>
<dbReference type="Pfam" id="PF01726">
    <property type="entry name" value="LexA_DNA_bind"/>
    <property type="match status" value="1"/>
</dbReference>
<dbReference type="Pfam" id="PF00717">
    <property type="entry name" value="Peptidase_S24"/>
    <property type="match status" value="1"/>
</dbReference>
<dbReference type="PRINTS" id="PR00726">
    <property type="entry name" value="LEXASERPTASE"/>
</dbReference>
<dbReference type="SUPFAM" id="SSF51306">
    <property type="entry name" value="LexA/Signal peptidase"/>
    <property type="match status" value="1"/>
</dbReference>
<dbReference type="SUPFAM" id="SSF46785">
    <property type="entry name" value="Winged helix' DNA-binding domain"/>
    <property type="match status" value="1"/>
</dbReference>
<accession>P0A154</accession>
<accession>P37453</accession>
<accession>Q9EUU0</accession>
<keyword id="KW-0068">Autocatalytic cleavage</keyword>
<keyword id="KW-0227">DNA damage</keyword>
<keyword id="KW-0234">DNA repair</keyword>
<keyword id="KW-0235">DNA replication</keyword>
<keyword id="KW-0238">DNA-binding</keyword>
<keyword id="KW-0378">Hydrolase</keyword>
<keyword id="KW-0678">Repressor</keyword>
<keyword id="KW-0742">SOS response</keyword>
<keyword id="KW-0804">Transcription</keyword>
<keyword id="KW-0805">Transcription regulation</keyword>
<organism>
    <name type="scientific">Pseudomonas putida</name>
    <name type="common">Arthrobacter siderocapsulatus</name>
    <dbReference type="NCBI Taxonomy" id="303"/>
    <lineage>
        <taxon>Bacteria</taxon>
        <taxon>Pseudomonadati</taxon>
        <taxon>Pseudomonadota</taxon>
        <taxon>Gammaproteobacteria</taxon>
        <taxon>Pseudomonadales</taxon>
        <taxon>Pseudomonadaceae</taxon>
        <taxon>Pseudomonas</taxon>
    </lineage>
</organism>
<protein>
    <recommendedName>
        <fullName evidence="1">LexA repressor</fullName>
        <ecNumber evidence="1">3.4.21.88</ecNumber>
    </recommendedName>
</protein>
<comment type="function">
    <text evidence="1">Represses a number of genes involved in the response to DNA damage (SOS response), including recA and lexA. In the presence of single-stranded DNA, RecA interacts with LexA causing an autocatalytic cleavage which disrupts the DNA-binding part of LexA, leading to derepression of the SOS regulon and eventually DNA repair.</text>
</comment>
<comment type="catalytic activity">
    <reaction evidence="1">
        <text>Hydrolysis of Ala-|-Gly bond in repressor LexA.</text>
        <dbReference type="EC" id="3.4.21.88"/>
    </reaction>
</comment>
<comment type="subunit">
    <text evidence="1">Homodimer.</text>
</comment>
<comment type="similarity">
    <text evidence="1">Belongs to the peptidase S24 family.</text>
</comment>